<proteinExistence type="evidence at transcript level"/>
<gene>
    <name evidence="5" type="primary">LEA6</name>
    <name evidence="6" type="synonym">LEA4-1</name>
    <name evidence="8" type="ordered locus">At1g32560</name>
    <name evidence="9" type="ORF">T9G5.2</name>
</gene>
<reference key="1">
    <citation type="submission" date="1995-07" db="EMBL/GenBank/DDBJ databases">
        <title>A.thaliana mRNA for LEA protein.</title>
        <authorList>
            <person name="Grellet F."/>
            <person name="Cooke R."/>
            <person name="Laudi M."/>
            <person name="Raynal M."/>
            <person name="Delseny M."/>
        </authorList>
    </citation>
    <scope>NUCLEOTIDE SEQUENCE [MRNA]</scope>
    <source>
        <strain>cv. Columbia</strain>
    </source>
</reference>
<reference key="2">
    <citation type="journal article" date="2000" name="Nature">
        <title>Sequence and analysis of chromosome 1 of the plant Arabidopsis thaliana.</title>
        <authorList>
            <person name="Theologis A."/>
            <person name="Ecker J.R."/>
            <person name="Palm C.J."/>
            <person name="Federspiel N.A."/>
            <person name="Kaul S."/>
            <person name="White O."/>
            <person name="Alonso J."/>
            <person name="Altafi H."/>
            <person name="Araujo R."/>
            <person name="Bowman C.L."/>
            <person name="Brooks S.Y."/>
            <person name="Buehler E."/>
            <person name="Chan A."/>
            <person name="Chao Q."/>
            <person name="Chen H."/>
            <person name="Cheuk R.F."/>
            <person name="Chin C.W."/>
            <person name="Chung M.K."/>
            <person name="Conn L."/>
            <person name="Conway A.B."/>
            <person name="Conway A.R."/>
            <person name="Creasy T.H."/>
            <person name="Dewar K."/>
            <person name="Dunn P."/>
            <person name="Etgu P."/>
            <person name="Feldblyum T.V."/>
            <person name="Feng J.-D."/>
            <person name="Fong B."/>
            <person name="Fujii C.Y."/>
            <person name="Gill J.E."/>
            <person name="Goldsmith A.D."/>
            <person name="Haas B."/>
            <person name="Hansen N.F."/>
            <person name="Hughes B."/>
            <person name="Huizar L."/>
            <person name="Hunter J.L."/>
            <person name="Jenkins J."/>
            <person name="Johnson-Hopson C."/>
            <person name="Khan S."/>
            <person name="Khaykin E."/>
            <person name="Kim C.J."/>
            <person name="Koo H.L."/>
            <person name="Kremenetskaia I."/>
            <person name="Kurtz D.B."/>
            <person name="Kwan A."/>
            <person name="Lam B."/>
            <person name="Langin-Hooper S."/>
            <person name="Lee A."/>
            <person name="Lee J.M."/>
            <person name="Lenz C.A."/>
            <person name="Li J.H."/>
            <person name="Li Y.-P."/>
            <person name="Lin X."/>
            <person name="Liu S.X."/>
            <person name="Liu Z.A."/>
            <person name="Luros J.S."/>
            <person name="Maiti R."/>
            <person name="Marziali A."/>
            <person name="Militscher J."/>
            <person name="Miranda M."/>
            <person name="Nguyen M."/>
            <person name="Nierman W.C."/>
            <person name="Osborne B.I."/>
            <person name="Pai G."/>
            <person name="Peterson J."/>
            <person name="Pham P.K."/>
            <person name="Rizzo M."/>
            <person name="Rooney T."/>
            <person name="Rowley D."/>
            <person name="Sakano H."/>
            <person name="Salzberg S.L."/>
            <person name="Schwartz J.R."/>
            <person name="Shinn P."/>
            <person name="Southwick A.M."/>
            <person name="Sun H."/>
            <person name="Tallon L.J."/>
            <person name="Tambunga G."/>
            <person name="Toriumi M.J."/>
            <person name="Town C.D."/>
            <person name="Utterback T."/>
            <person name="Van Aken S."/>
            <person name="Vaysberg M."/>
            <person name="Vysotskaia V.S."/>
            <person name="Walker M."/>
            <person name="Wu D."/>
            <person name="Yu G."/>
            <person name="Fraser C.M."/>
            <person name="Venter J.C."/>
            <person name="Davis R.W."/>
        </authorList>
    </citation>
    <scope>NUCLEOTIDE SEQUENCE [LARGE SCALE GENOMIC DNA]</scope>
    <source>
        <strain>cv. Columbia</strain>
    </source>
</reference>
<reference key="3">
    <citation type="journal article" date="2017" name="Plant J.">
        <title>Araport11: a complete reannotation of the Arabidopsis thaliana reference genome.</title>
        <authorList>
            <person name="Cheng C.Y."/>
            <person name="Krishnakumar V."/>
            <person name="Chan A.P."/>
            <person name="Thibaud-Nissen F."/>
            <person name="Schobel S."/>
            <person name="Town C.D."/>
        </authorList>
    </citation>
    <scope>GENOME REANNOTATION</scope>
    <source>
        <strain>cv. Columbia</strain>
    </source>
</reference>
<reference key="4">
    <citation type="journal article" date="2003" name="Science">
        <title>Empirical analysis of transcriptional activity in the Arabidopsis genome.</title>
        <authorList>
            <person name="Yamada K."/>
            <person name="Lim J."/>
            <person name="Dale J.M."/>
            <person name="Chen H."/>
            <person name="Shinn P."/>
            <person name="Palm C.J."/>
            <person name="Southwick A.M."/>
            <person name="Wu H.C."/>
            <person name="Kim C.J."/>
            <person name="Nguyen M."/>
            <person name="Pham P.K."/>
            <person name="Cheuk R.F."/>
            <person name="Karlin-Newmann G."/>
            <person name="Liu S.X."/>
            <person name="Lam B."/>
            <person name="Sakano H."/>
            <person name="Wu T."/>
            <person name="Yu G."/>
            <person name="Miranda M."/>
            <person name="Quach H.L."/>
            <person name="Tripp M."/>
            <person name="Chang C.H."/>
            <person name="Lee J.M."/>
            <person name="Toriumi M.J."/>
            <person name="Chan M.M."/>
            <person name="Tang C.C."/>
            <person name="Onodera C.S."/>
            <person name="Deng J.M."/>
            <person name="Akiyama K."/>
            <person name="Ansari Y."/>
            <person name="Arakawa T."/>
            <person name="Banh J."/>
            <person name="Banno F."/>
            <person name="Bowser L."/>
            <person name="Brooks S.Y."/>
            <person name="Carninci P."/>
            <person name="Chao Q."/>
            <person name="Choy N."/>
            <person name="Enju A."/>
            <person name="Goldsmith A.D."/>
            <person name="Gurjal M."/>
            <person name="Hansen N.F."/>
            <person name="Hayashizaki Y."/>
            <person name="Johnson-Hopson C."/>
            <person name="Hsuan V.W."/>
            <person name="Iida K."/>
            <person name="Karnes M."/>
            <person name="Khan S."/>
            <person name="Koesema E."/>
            <person name="Ishida J."/>
            <person name="Jiang P.X."/>
            <person name="Jones T."/>
            <person name="Kawai J."/>
            <person name="Kamiya A."/>
            <person name="Meyers C."/>
            <person name="Nakajima M."/>
            <person name="Narusaka M."/>
            <person name="Seki M."/>
            <person name="Sakurai T."/>
            <person name="Satou M."/>
            <person name="Tamse R."/>
            <person name="Vaysberg M."/>
            <person name="Wallender E.K."/>
            <person name="Wong C."/>
            <person name="Yamamura Y."/>
            <person name="Yuan S."/>
            <person name="Shinozaki K."/>
            <person name="Davis R.W."/>
            <person name="Theologis A."/>
            <person name="Ecker J.R."/>
        </authorList>
    </citation>
    <scope>NUCLEOTIDE SEQUENCE [LARGE SCALE MRNA]</scope>
    <source>
        <strain>cv. Columbia</strain>
    </source>
</reference>
<reference key="5">
    <citation type="journal article" date="1996" name="Plant J.">
        <title>Further progress towards a catalogue of all Arabidopsis genes: analysis of a set of 5000 non-redundant ESTs.</title>
        <authorList>
            <person name="Cooke R."/>
            <person name="Raynal M."/>
            <person name="Laudie M."/>
            <person name="Grellet F."/>
            <person name="Delseny M."/>
            <person name="Morris P.-C."/>
            <person name="Guerrier D."/>
            <person name="Giraudat J."/>
            <person name="Quigley F."/>
            <person name="Clabault G."/>
            <person name="Li Y.-F."/>
            <person name="Mache R."/>
            <person name="Krivitzky M."/>
            <person name="Gy I.J.-J."/>
            <person name="Kreis M."/>
            <person name="Lecharny A."/>
            <person name="Parmentier Y."/>
            <person name="Marbach J."/>
            <person name="Fleck J."/>
            <person name="Clement B."/>
            <person name="Philipps G."/>
            <person name="Herve C."/>
            <person name="Bardet C."/>
            <person name="Tremousaygue D."/>
            <person name="Lescure B."/>
            <person name="Lacomme C."/>
            <person name="Roby D."/>
            <person name="Jourjon M.-F."/>
            <person name="Chabrier P."/>
            <person name="Charpenteau J.-L."/>
            <person name="Desprez T."/>
            <person name="Amselem J."/>
            <person name="Chiapello H."/>
            <person name="Hoefte H."/>
        </authorList>
    </citation>
    <scope>NUCLEOTIDE SEQUENCE [LARGE SCALE MRNA] OF 1-103</scope>
    <source>
        <strain>cv. Columbia</strain>
        <tissue>Dry seed</tissue>
    </source>
</reference>
<reference key="6">
    <citation type="journal article" date="2008" name="BMC Genomics">
        <title>LEA (late embryogenesis abundant) proteins and their encoding genes in Arabidopsis thaliana.</title>
        <authorList>
            <person name="Hundertmark M."/>
            <person name="Hincha D.K."/>
        </authorList>
    </citation>
    <scope>GENE FAMILY</scope>
    <scope>NOMENCLATURE</scope>
</reference>
<reference key="7">
    <citation type="journal article" date="2010" name="Plant Physiol.">
        <title>Functional analysis of the group 4 late embryogenesis abundant proteins reveals their relevance in the adaptive response during water deficit in Arabidopsis.</title>
        <authorList>
            <person name="Olvera-Carrillo Y."/>
            <person name="Campos F."/>
            <person name="Reyes J.L."/>
            <person name="Garciarrubio A."/>
            <person name="Covarrubias A.A."/>
        </authorList>
    </citation>
    <scope>FUNCTION</scope>
    <scope>DEVELOPMENTAL STAGE</scope>
    <scope>INDUCTION</scope>
</reference>
<protein>
    <recommendedName>
        <fullName evidence="5">Late embryogenesis abundant protein 6</fullName>
    </recommendedName>
    <alternativeName>
        <fullName evidence="6">Late embryogenesis abundant protein 4-1</fullName>
        <shortName evidence="6">AtLEA4-1</shortName>
    </alternativeName>
</protein>
<name>LEA6_ARATH</name>
<feature type="chain" id="PRO_0000438096" description="Late embryogenesis abundant protein 6">
    <location>
        <begin position="1"/>
        <end position="134"/>
    </location>
</feature>
<feature type="region of interest" description="Disordered" evidence="3">
    <location>
        <begin position="31"/>
        <end position="53"/>
    </location>
</feature>
<feature type="region of interest" description="Disordered" evidence="3">
    <location>
        <begin position="80"/>
        <end position="134"/>
    </location>
</feature>
<feature type="coiled-coil region" evidence="2">
    <location>
        <begin position="34"/>
        <end position="70"/>
    </location>
</feature>
<feature type="compositionally biased region" description="Basic and acidic residues" evidence="3">
    <location>
        <begin position="31"/>
        <end position="45"/>
    </location>
</feature>
<feature type="compositionally biased region" description="Low complexity" evidence="3">
    <location>
        <begin position="115"/>
        <end position="127"/>
    </location>
</feature>
<feature type="sequence conflict" description="In Ref. 5; CAA81577." evidence="7" ref="5">
    <original>E</original>
    <variation>D</variation>
    <location>
        <position position="54"/>
    </location>
</feature>
<feature type="sequence conflict" description="In Ref. 5; CAA81577." evidence="7" ref="5">
    <original>PQQAPVPA</original>
    <variation>SQQASVPS</variation>
    <location>
        <begin position="88"/>
        <end position="95"/>
    </location>
</feature>
<feature type="sequence conflict" description="In Ref. 5; CAA81577." evidence="7" ref="5">
    <original>G</original>
    <variation>A</variation>
    <location>
        <position position="101"/>
    </location>
</feature>
<sequence length="134" mass="14891">MQSAKQKISDMASTAKEKMVICQAKADEKAERAMARTKEEKEIAHQRRKAKEAEANMDMHMAKAAHAEDKLMAKQSHYHVTDHGPHVPQQAPVPAPAPVMGHGYGHNPTGVTSVPPQTYHPTYPPTGHHNHHHY</sequence>
<dbReference type="EMBL" id="X89505">
    <property type="protein sequence ID" value="CAA61676.1"/>
    <property type="molecule type" value="mRNA"/>
</dbReference>
<dbReference type="EMBL" id="AC055769">
    <property type="protein sequence ID" value="AAG51244.1"/>
    <property type="molecule type" value="Genomic_DNA"/>
</dbReference>
<dbReference type="EMBL" id="CP002684">
    <property type="protein sequence ID" value="AEE31503.1"/>
    <property type="molecule type" value="Genomic_DNA"/>
</dbReference>
<dbReference type="EMBL" id="AY063826">
    <property type="protein sequence ID" value="AAL36182.1"/>
    <property type="molecule type" value="mRNA"/>
</dbReference>
<dbReference type="EMBL" id="AY096424">
    <property type="protein sequence ID" value="AAM20064.1"/>
    <property type="molecule type" value="mRNA"/>
</dbReference>
<dbReference type="EMBL" id="Z27059">
    <property type="protein sequence ID" value="CAA81577.1"/>
    <property type="molecule type" value="mRNA"/>
</dbReference>
<dbReference type="PIR" id="S71249">
    <property type="entry name" value="S71249"/>
</dbReference>
<dbReference type="SMR" id="Q39138"/>
<dbReference type="FunCoup" id="Q39138">
    <property type="interactions" value="17"/>
</dbReference>
<dbReference type="STRING" id="3702.Q39138"/>
<dbReference type="PaxDb" id="3702-AT1G32560.1"/>
<dbReference type="ProteomicsDB" id="230137"/>
<dbReference type="EnsemblPlants" id="AT1G32560.1">
    <property type="protein sequence ID" value="AT1G32560.1"/>
    <property type="gene ID" value="AT1G32560"/>
</dbReference>
<dbReference type="GeneID" id="840150"/>
<dbReference type="Gramene" id="AT1G32560.1">
    <property type="protein sequence ID" value="AT1G32560.1"/>
    <property type="gene ID" value="AT1G32560"/>
</dbReference>
<dbReference type="KEGG" id="ath:AT1G32560"/>
<dbReference type="Araport" id="AT1G32560"/>
<dbReference type="TAIR" id="AT1G32560">
    <property type="gene designation" value="ATLEA4-1"/>
</dbReference>
<dbReference type="eggNOG" id="ENOG502S735">
    <property type="taxonomic scope" value="Eukaryota"/>
</dbReference>
<dbReference type="HOGENOM" id="CLU_134661_0_0_1"/>
<dbReference type="InParanoid" id="Q39138"/>
<dbReference type="OMA" id="MDMHMAK"/>
<dbReference type="PhylomeDB" id="Q39138"/>
<dbReference type="PRO" id="PR:Q39138"/>
<dbReference type="Proteomes" id="UP000006548">
    <property type="component" value="Chromosome 1"/>
</dbReference>
<dbReference type="ExpressionAtlas" id="Q39138">
    <property type="expression patterns" value="baseline and differential"/>
</dbReference>
<dbReference type="GO" id="GO:0005829">
    <property type="term" value="C:cytosol"/>
    <property type="evidence" value="ECO:0007005"/>
    <property type="project" value="TAIR"/>
</dbReference>
<dbReference type="GO" id="GO:0009506">
    <property type="term" value="C:plasmodesma"/>
    <property type="evidence" value="ECO:0007005"/>
    <property type="project" value="TAIR"/>
</dbReference>
<dbReference type="GO" id="GO:0009793">
    <property type="term" value="P:embryo development ending in seed dormancy"/>
    <property type="evidence" value="ECO:0007669"/>
    <property type="project" value="InterPro"/>
</dbReference>
<dbReference type="GO" id="GO:0006970">
    <property type="term" value="P:response to osmotic stress"/>
    <property type="evidence" value="ECO:0000315"/>
    <property type="project" value="TAIR"/>
</dbReference>
<dbReference type="GO" id="GO:0009414">
    <property type="term" value="P:response to water deprivation"/>
    <property type="evidence" value="ECO:0000315"/>
    <property type="project" value="TAIR"/>
</dbReference>
<dbReference type="GO" id="GO:0048316">
    <property type="term" value="P:seed development"/>
    <property type="evidence" value="ECO:0000315"/>
    <property type="project" value="TAIR"/>
</dbReference>
<dbReference type="InterPro" id="IPR005513">
    <property type="entry name" value="LEA_1"/>
</dbReference>
<dbReference type="PANTHER" id="PTHR33493:SF6">
    <property type="entry name" value="LATE EMBRYOGENESIS ABUNDANT PROTEIN 6"/>
    <property type="match status" value="1"/>
</dbReference>
<dbReference type="PANTHER" id="PTHR33493">
    <property type="entry name" value="LATE EMBRYOGENESIS ABUNDANT PROTEIN 6-RELATED"/>
    <property type="match status" value="1"/>
</dbReference>
<dbReference type="Pfam" id="PF03760">
    <property type="entry name" value="LEA_1"/>
    <property type="match status" value="1"/>
</dbReference>
<evidence type="ECO:0000250" key="1">
    <source>
        <dbReference type="UniProtKB" id="Q96273"/>
    </source>
</evidence>
<evidence type="ECO:0000255" key="2"/>
<evidence type="ECO:0000256" key="3">
    <source>
        <dbReference type="SAM" id="MobiDB-lite"/>
    </source>
</evidence>
<evidence type="ECO:0000269" key="4">
    <source>
    </source>
</evidence>
<evidence type="ECO:0000303" key="5">
    <source>
    </source>
</evidence>
<evidence type="ECO:0000303" key="6">
    <source>
    </source>
</evidence>
<evidence type="ECO:0000305" key="7"/>
<evidence type="ECO:0000312" key="8">
    <source>
        <dbReference type="Araport" id="AT1G32560"/>
    </source>
</evidence>
<evidence type="ECO:0000312" key="9">
    <source>
        <dbReference type="EMBL" id="AAG51244.1"/>
    </source>
</evidence>
<comment type="function">
    <text evidence="1 4">Involved dehydration tolerance. Involved in the adaptive response of vascular plants to withstand water deficit (PubMed:20668063). May possess chaperone-like activity under water deficit (By similarity).</text>
</comment>
<comment type="developmental stage">
    <text evidence="4">Expressed during embryo development and in dry seed. Expression decreases significantly after seed germination.</text>
</comment>
<comment type="induction">
    <text evidence="4">By dehydration stress.</text>
</comment>
<comment type="similarity">
    <text evidence="7">Belongs to the LEA type 1 family.</text>
</comment>
<accession>Q39138</accession>
<accession>Q42167</accession>
<keyword id="KW-0175">Coiled coil</keyword>
<keyword id="KW-1185">Reference proteome</keyword>
<keyword id="KW-0346">Stress response</keyword>
<organism>
    <name type="scientific">Arabidopsis thaliana</name>
    <name type="common">Mouse-ear cress</name>
    <dbReference type="NCBI Taxonomy" id="3702"/>
    <lineage>
        <taxon>Eukaryota</taxon>
        <taxon>Viridiplantae</taxon>
        <taxon>Streptophyta</taxon>
        <taxon>Embryophyta</taxon>
        <taxon>Tracheophyta</taxon>
        <taxon>Spermatophyta</taxon>
        <taxon>Magnoliopsida</taxon>
        <taxon>eudicotyledons</taxon>
        <taxon>Gunneridae</taxon>
        <taxon>Pentapetalae</taxon>
        <taxon>rosids</taxon>
        <taxon>malvids</taxon>
        <taxon>Brassicales</taxon>
        <taxon>Brassicaceae</taxon>
        <taxon>Camelineae</taxon>
        <taxon>Arabidopsis</taxon>
    </lineage>
</organism>